<feature type="chain" id="PRO_0000210448" description="Uncharacterized protein MG181">
    <location>
        <begin position="1"/>
        <end position="420"/>
    </location>
</feature>
<feature type="transmembrane region" description="Helical" evidence="1">
    <location>
        <begin position="26"/>
        <end position="46"/>
    </location>
</feature>
<feature type="transmembrane region" description="Helical" evidence="1">
    <location>
        <begin position="66"/>
        <end position="86"/>
    </location>
</feature>
<feature type="transmembrane region" description="Helical" evidence="1">
    <location>
        <begin position="231"/>
        <end position="251"/>
    </location>
</feature>
<feature type="transmembrane region" description="Helical" evidence="1">
    <location>
        <begin position="276"/>
        <end position="296"/>
    </location>
</feature>
<feature type="transmembrane region" description="Helical" evidence="1">
    <location>
        <begin position="317"/>
        <end position="337"/>
    </location>
</feature>
<feature type="transmembrane region" description="Helical" evidence="1">
    <location>
        <begin position="369"/>
        <end position="389"/>
    </location>
</feature>
<feature type="sequence conflict" description="In Ref. 2." evidence="2" ref="2">
    <original>LGTPEW</original>
    <variation>SRYTRM</variation>
    <location>
        <begin position="397"/>
        <end position="402"/>
    </location>
</feature>
<organism>
    <name type="scientific">Mycoplasma genitalium (strain ATCC 33530 / DSM 19775 / NCTC 10195 / G37)</name>
    <name type="common">Mycoplasmoides genitalium</name>
    <dbReference type="NCBI Taxonomy" id="243273"/>
    <lineage>
        <taxon>Bacteria</taxon>
        <taxon>Bacillati</taxon>
        <taxon>Mycoplasmatota</taxon>
        <taxon>Mycoplasmoidales</taxon>
        <taxon>Mycoplasmoidaceae</taxon>
        <taxon>Mycoplasmoides</taxon>
    </lineage>
</organism>
<reference key="1">
    <citation type="journal article" date="1995" name="Science">
        <title>The minimal gene complement of Mycoplasma genitalium.</title>
        <authorList>
            <person name="Fraser C.M."/>
            <person name="Gocayne J.D."/>
            <person name="White O."/>
            <person name="Adams M.D."/>
            <person name="Clayton R.A."/>
            <person name="Fleischmann R.D."/>
            <person name="Bult C.J."/>
            <person name="Kerlavage A.R."/>
            <person name="Sutton G.G."/>
            <person name="Kelley J.M."/>
            <person name="Fritchman J.L."/>
            <person name="Weidman J.F."/>
            <person name="Small K.V."/>
            <person name="Sandusky M."/>
            <person name="Fuhrmann J.L."/>
            <person name="Nguyen D.T."/>
            <person name="Utterback T.R."/>
            <person name="Saudek D.M."/>
            <person name="Phillips C.A."/>
            <person name="Merrick J.M."/>
            <person name="Tomb J.-F."/>
            <person name="Dougherty B.A."/>
            <person name="Bott K.F."/>
            <person name="Hu P.-C."/>
            <person name="Lucier T.S."/>
            <person name="Peterson S.N."/>
            <person name="Smith H.O."/>
            <person name="Hutchison C.A. III"/>
            <person name="Venter J.C."/>
        </authorList>
    </citation>
    <scope>NUCLEOTIDE SEQUENCE [LARGE SCALE GENOMIC DNA]</scope>
    <source>
        <strain>ATCC 33530 / DSM 19775 / NCTC 10195 / G37</strain>
    </source>
</reference>
<reference key="2">
    <citation type="journal article" date="1993" name="J. Bacteriol.">
        <title>A survey of the Mycoplasma genitalium genome by using random sequencing.</title>
        <authorList>
            <person name="Peterson S.N."/>
            <person name="Hu P.-C."/>
            <person name="Bott K.F."/>
            <person name="Hutchison C.A. III"/>
        </authorList>
    </citation>
    <scope>NUCLEOTIDE SEQUENCE [GENOMIC DNA] OF 1-57 AND 397-420</scope>
    <source>
        <strain>ATCC 33530 / DSM 19775 / NCTC 10195 / G37</strain>
    </source>
</reference>
<proteinExistence type="inferred from homology"/>
<comment type="subcellular location">
    <subcellularLocation>
        <location evidence="2">Cell membrane</location>
        <topology evidence="2">Multi-pass membrane protein</topology>
    </subcellularLocation>
</comment>
<comment type="similarity">
    <text evidence="2">Belongs to the CbiQ family.</text>
</comment>
<comment type="sequence caution" evidence="2">
    <conflict type="erroneous initiation">
        <sequence resource="EMBL-CDS" id="AAD10563"/>
    </conflict>
</comment>
<name>Y181_MYCGE</name>
<protein>
    <recommendedName>
        <fullName>Uncharacterized protein MG181</fullName>
    </recommendedName>
</protein>
<gene>
    <name type="ordered locus">MG181</name>
</gene>
<dbReference type="EMBL" id="L43967">
    <property type="protein sequence ID" value="AAC71400.1"/>
    <property type="molecule type" value="Genomic_DNA"/>
</dbReference>
<dbReference type="EMBL" id="U01750">
    <property type="protein sequence ID" value="AAD10563.1"/>
    <property type="status" value="ALT_INIT"/>
    <property type="molecule type" value="Genomic_DNA"/>
</dbReference>
<dbReference type="EMBL" id="U02176">
    <property type="protein sequence ID" value="AAD12459.1"/>
    <property type="molecule type" value="Genomic_DNA"/>
</dbReference>
<dbReference type="PIR" id="A64220">
    <property type="entry name" value="A64220"/>
</dbReference>
<dbReference type="RefSeq" id="WP_009885866.1">
    <property type="nucleotide sequence ID" value="NC_000908.2"/>
</dbReference>
<dbReference type="FunCoup" id="P47427">
    <property type="interactions" value="119"/>
</dbReference>
<dbReference type="STRING" id="243273.MG_181"/>
<dbReference type="GeneID" id="88282313"/>
<dbReference type="KEGG" id="mge:MG_181"/>
<dbReference type="eggNOG" id="COG0619">
    <property type="taxonomic scope" value="Bacteria"/>
</dbReference>
<dbReference type="HOGENOM" id="CLU_056469_2_2_14"/>
<dbReference type="InParanoid" id="P47427"/>
<dbReference type="OrthoDB" id="8075495at2"/>
<dbReference type="BioCyc" id="MGEN243273:G1GJ2-205-MONOMER"/>
<dbReference type="Proteomes" id="UP000000807">
    <property type="component" value="Chromosome"/>
</dbReference>
<dbReference type="GO" id="GO:0005886">
    <property type="term" value="C:plasma membrane"/>
    <property type="evidence" value="ECO:0000318"/>
    <property type="project" value="GO_Central"/>
</dbReference>
<dbReference type="CDD" id="cd16914">
    <property type="entry name" value="EcfT"/>
    <property type="match status" value="1"/>
</dbReference>
<dbReference type="InterPro" id="IPR003339">
    <property type="entry name" value="ABC/ECF_trnsptr_transmembrane"/>
</dbReference>
<dbReference type="PANTHER" id="PTHR33514">
    <property type="entry name" value="PROTEIN ABCI12, CHLOROPLASTIC"/>
    <property type="match status" value="1"/>
</dbReference>
<dbReference type="PANTHER" id="PTHR33514:SF13">
    <property type="entry name" value="PROTEIN ABCI12, CHLOROPLASTIC"/>
    <property type="match status" value="1"/>
</dbReference>
<dbReference type="Pfam" id="PF02361">
    <property type="entry name" value="CbiQ"/>
    <property type="match status" value="2"/>
</dbReference>
<sequence length="420" mass="47558">MDNFINGYIPRNSFVHKLHPTTKLVIFLLLVILVFVPIGFVFQSVIFLFVTFVFFIAKLPGRFYSSAIKSITLLFLLLLFVNWFTFRDPGFYLTSDQLNSLPAIDNSKFSFWNISLFNYQDNVFSQVFAFNRGNLTNLNQLDFFYKANNADSYTKVKGIDSLASMLANNGNGLSKDKILSAFLDHNLNLYLARSWGANFAGFVVDFNPTTQLFKLTPFLANASYVLTLRAVILAFYVTQKILIMILFATVLTSTSSSVELAYGIERLLWPLKLIKIPVNVFAMTIAIAIRFVPSLLLESQRILNAQASRGLDFRNGGFLVKMRSLSSLVVPMVSIAFRNASELASAMEARGYHPAKKRSSYRQYKITWIDILALFLVFAWFVVIIFLTIRGAVFLDLGTPEWLLTGKINEQVIRDLKVSG</sequence>
<accession>P47427</accession>
<accession>Q49299</accession>
<accession>Q49451</accession>
<keyword id="KW-1003">Cell membrane</keyword>
<keyword id="KW-0472">Membrane</keyword>
<keyword id="KW-1185">Reference proteome</keyword>
<keyword id="KW-0812">Transmembrane</keyword>
<keyword id="KW-1133">Transmembrane helix</keyword>
<evidence type="ECO:0000255" key="1"/>
<evidence type="ECO:0000305" key="2"/>